<organism>
    <name type="scientific">Mycobacterium bovis (strain ATCC BAA-935 / AF2122/97)</name>
    <dbReference type="NCBI Taxonomy" id="233413"/>
    <lineage>
        <taxon>Bacteria</taxon>
        <taxon>Bacillati</taxon>
        <taxon>Actinomycetota</taxon>
        <taxon>Actinomycetes</taxon>
        <taxon>Mycobacteriales</taxon>
        <taxon>Mycobacteriaceae</taxon>
        <taxon>Mycobacterium</taxon>
        <taxon>Mycobacterium tuberculosis complex</taxon>
    </lineage>
</organism>
<sequence>MLIAGYLTDWRIMTTAQLRPIAPQKLHFSENLSVWVSDAQCRLVVSQPALDPTLWNTYLQGALRAYSKHGVECTLDLDAISDGSDTQLFFAAIDIGGDVVGGARVIGPLRSADDSHAVVEWAGNPGLSAVRKMINDRAPFGVVEVKSGWVNSDAQRSDAIAAALARALPLSMSLLGVQFVMGTAAAHALDRWRSSGGVIAARIPAAAYPDERYRTKMIWWDRRTLANHAEPKQLSRMLVESRKLLRDVEALSATTAATAGAEQ</sequence>
<reference key="1">
    <citation type="journal article" date="2003" name="Proc. Natl. Acad. Sci. U.S.A.">
        <title>The complete genome sequence of Mycobacterium bovis.</title>
        <authorList>
            <person name="Garnier T."/>
            <person name="Eiglmeier K."/>
            <person name="Camus J.-C."/>
            <person name="Medina N."/>
            <person name="Mansoor H."/>
            <person name="Pryor M."/>
            <person name="Duthoy S."/>
            <person name="Grondin S."/>
            <person name="Lacroix C."/>
            <person name="Monsempe C."/>
            <person name="Simon S."/>
            <person name="Harris B."/>
            <person name="Atkin R."/>
            <person name="Doggett J."/>
            <person name="Mayes R."/>
            <person name="Keating L."/>
            <person name="Wheeler P.R."/>
            <person name="Parkhill J."/>
            <person name="Barrell B.G."/>
            <person name="Cole S.T."/>
            <person name="Gordon S.V."/>
            <person name="Hewinson R.G."/>
        </authorList>
    </citation>
    <scope>NUCLEOTIDE SEQUENCE [LARGE SCALE GENOMIC DNA]</scope>
    <source>
        <strain>ATCC BAA-935 / AF2122/97</strain>
    </source>
</reference>
<reference key="2">
    <citation type="journal article" date="2017" name="Genome Announc.">
        <title>Updated reference genome sequence and annotation of Mycobacterium bovis AF2122/97.</title>
        <authorList>
            <person name="Malone K.M."/>
            <person name="Farrell D."/>
            <person name="Stuber T.P."/>
            <person name="Schubert O.T."/>
            <person name="Aebersold R."/>
            <person name="Robbe-Austerman S."/>
            <person name="Gordon S.V."/>
        </authorList>
    </citation>
    <scope>NUCLEOTIDE SEQUENCE [LARGE SCALE GENOMIC DNA]</scope>
    <scope>GENOME REANNOTATION</scope>
    <source>
        <strain>ATCC BAA-935 / AF2122/97</strain>
    </source>
</reference>
<dbReference type="EMBL" id="LT708304">
    <property type="protein sequence ID" value="SIT99994.1"/>
    <property type="molecule type" value="Genomic_DNA"/>
</dbReference>
<dbReference type="RefSeq" id="NP_855045.1">
    <property type="nucleotide sequence ID" value="NC_002945.3"/>
</dbReference>
<dbReference type="KEGG" id="mbo:BQ2027_MB1391C"/>
<dbReference type="PATRIC" id="fig|233413.5.peg.1523"/>
<dbReference type="Proteomes" id="UP000001419">
    <property type="component" value="Chromosome"/>
</dbReference>
<gene>
    <name type="ordered locus">BQ2027_MB1391C</name>
</gene>
<proteinExistence type="predicted"/>
<keyword id="KW-1185">Reference proteome</keyword>
<protein>
    <recommendedName>
        <fullName>Uncharacterized protein Mb1391c</fullName>
    </recommendedName>
</protein>
<accession>P64828</accession>
<accession>A0A1R3XZ38</accession>
<accession>Q11026</accession>
<accession>X2BHV6</accession>
<name>Y1391_MYCBO</name>
<feature type="chain" id="PRO_0000103827" description="Uncharacterized protein Mb1391c">
    <location>
        <begin position="1"/>
        <end position="263"/>
    </location>
</feature>